<comment type="function">
    <text evidence="6 8">Small GTPase required for proper localization of RNA polymerase II and III (RNAPII and RNAPIII). May act at an RNAP assembly step prior to nuclear import (PubMed:23267056). Required for establishment of sister chromatid cohesion (PubMed:18439903).</text>
</comment>
<comment type="subunit">
    <text evidence="1 7 9">Heterodimers with NPA3/GPN1 or GPN3 (PubMed:21844196, PubMed:23324351). Binds to RNA polymerase II (RNAPII) (By similarity).</text>
</comment>
<comment type="interaction">
    <interactant intactId="EBI-37977">
        <id>Q08726</id>
    </interactant>
    <interactant intactId="EBI-25534">
        <id>P47122</id>
        <label>NPA3</label>
    </interactant>
    <organismsDiffer>false</organismsDiffer>
    <experiments>3</experiments>
</comment>
<comment type="subcellular location">
    <subcellularLocation>
        <location evidence="3 5">Cytoplasm</location>
    </subcellularLocation>
</comment>
<comment type="miscellaneous">
    <text evidence="4">Present with 9230 molecules/cell in log phase SD medium.</text>
</comment>
<comment type="similarity">
    <text evidence="11">Belongs to the GPN-loop GTPase family.</text>
</comment>
<keyword id="KW-0963">Cytoplasm</keyword>
<keyword id="KW-0342">GTP-binding</keyword>
<keyword id="KW-0378">Hydrolase</keyword>
<keyword id="KW-0547">Nucleotide-binding</keyword>
<keyword id="KW-1185">Reference proteome</keyword>
<accession>Q08726</accession>
<accession>D6W2W3</accession>
<dbReference type="EC" id="3.6.5.-" evidence="11"/>
<dbReference type="EMBL" id="Z75170">
    <property type="protein sequence ID" value="CAA99484.1"/>
    <property type="molecule type" value="Genomic_DNA"/>
</dbReference>
<dbReference type="EMBL" id="BK006948">
    <property type="protein sequence ID" value="DAA11029.1"/>
    <property type="molecule type" value="Genomic_DNA"/>
</dbReference>
<dbReference type="PIR" id="S67159">
    <property type="entry name" value="S67159"/>
</dbReference>
<dbReference type="RefSeq" id="NP_014905.1">
    <property type="nucleotide sequence ID" value="NM_001183681.1"/>
</dbReference>
<dbReference type="SMR" id="Q08726"/>
<dbReference type="BioGRID" id="34652">
    <property type="interactions" value="325"/>
</dbReference>
<dbReference type="DIP" id="DIP-1912N"/>
<dbReference type="FunCoup" id="Q08726">
    <property type="interactions" value="1217"/>
</dbReference>
<dbReference type="IntAct" id="Q08726">
    <property type="interactions" value="15"/>
</dbReference>
<dbReference type="MINT" id="Q08726"/>
<dbReference type="STRING" id="4932.YOR262W"/>
<dbReference type="PaxDb" id="4932-YOR262W"/>
<dbReference type="PeptideAtlas" id="Q08726"/>
<dbReference type="EnsemblFungi" id="YOR262W_mRNA">
    <property type="protein sequence ID" value="YOR262W"/>
    <property type="gene ID" value="YOR262W"/>
</dbReference>
<dbReference type="GeneID" id="854436"/>
<dbReference type="KEGG" id="sce:YOR262W"/>
<dbReference type="AGR" id="SGD:S000005788"/>
<dbReference type="SGD" id="S000005788">
    <property type="gene designation" value="GPN2"/>
</dbReference>
<dbReference type="VEuPathDB" id="FungiDB:YOR262W"/>
<dbReference type="eggNOG" id="KOG1533">
    <property type="taxonomic scope" value="Eukaryota"/>
</dbReference>
<dbReference type="GeneTree" id="ENSGT00950000183172"/>
<dbReference type="HOGENOM" id="CLU_037460_0_2_1"/>
<dbReference type="InParanoid" id="Q08726"/>
<dbReference type="OMA" id="ATHNYFL"/>
<dbReference type="OrthoDB" id="5839at2759"/>
<dbReference type="BioCyc" id="YEAST:G3O-33753-MONOMER"/>
<dbReference type="BioGRID-ORCS" id="854436">
    <property type="hits" value="0 hits in 10 CRISPR screens"/>
</dbReference>
<dbReference type="PRO" id="PR:Q08726"/>
<dbReference type="Proteomes" id="UP000002311">
    <property type="component" value="Chromosome XV"/>
</dbReference>
<dbReference type="RNAct" id="Q08726">
    <property type="molecule type" value="protein"/>
</dbReference>
<dbReference type="GO" id="GO:0005737">
    <property type="term" value="C:cytoplasm"/>
    <property type="evidence" value="ECO:0007005"/>
    <property type="project" value="SGD"/>
</dbReference>
<dbReference type="GO" id="GO:0005525">
    <property type="term" value="F:GTP binding"/>
    <property type="evidence" value="ECO:0007669"/>
    <property type="project" value="UniProtKB-KW"/>
</dbReference>
<dbReference type="GO" id="GO:0003924">
    <property type="term" value="F:GTPase activity"/>
    <property type="evidence" value="ECO:0000250"/>
    <property type="project" value="SGD"/>
</dbReference>
<dbReference type="GO" id="GO:0034087">
    <property type="term" value="P:establishment of mitotic sister chromatid cohesion"/>
    <property type="evidence" value="ECO:0000315"/>
    <property type="project" value="SGD"/>
</dbReference>
<dbReference type="GO" id="GO:0006606">
    <property type="term" value="P:protein import into nucleus"/>
    <property type="evidence" value="ECO:0000315"/>
    <property type="project" value="SGD"/>
</dbReference>
<dbReference type="CDD" id="cd17871">
    <property type="entry name" value="GPN2"/>
    <property type="match status" value="1"/>
</dbReference>
<dbReference type="FunFam" id="3.40.50.300:FF:000338">
    <property type="entry name" value="GPN-loop GTPase 2"/>
    <property type="match status" value="1"/>
</dbReference>
<dbReference type="Gene3D" id="3.40.50.300">
    <property type="entry name" value="P-loop containing nucleotide triphosphate hydrolases"/>
    <property type="match status" value="1"/>
</dbReference>
<dbReference type="InterPro" id="IPR004130">
    <property type="entry name" value="Gpn"/>
</dbReference>
<dbReference type="InterPro" id="IPR030231">
    <property type="entry name" value="Gpn2"/>
</dbReference>
<dbReference type="InterPro" id="IPR027417">
    <property type="entry name" value="P-loop_NTPase"/>
</dbReference>
<dbReference type="PANTHER" id="PTHR21231:SF3">
    <property type="entry name" value="GPN-LOOP GTPASE 2"/>
    <property type="match status" value="1"/>
</dbReference>
<dbReference type="PANTHER" id="PTHR21231">
    <property type="entry name" value="XPA-BINDING PROTEIN 1-RELATED"/>
    <property type="match status" value="1"/>
</dbReference>
<dbReference type="Pfam" id="PF03029">
    <property type="entry name" value="ATP_bind_1"/>
    <property type="match status" value="1"/>
</dbReference>
<dbReference type="SUPFAM" id="SSF52540">
    <property type="entry name" value="P-loop containing nucleoside triphosphate hydrolases"/>
    <property type="match status" value="1"/>
</dbReference>
<protein>
    <recommendedName>
        <fullName evidence="10">GPN-loop GTPase 2</fullName>
        <ecNumber evidence="11">3.6.5.-</ecNumber>
    </recommendedName>
    <alternativeName>
        <fullName evidence="1">ATP-binding domain 1 family member B homolog</fullName>
    </alternativeName>
</protein>
<organism>
    <name type="scientific">Saccharomyces cerevisiae (strain ATCC 204508 / S288c)</name>
    <name type="common">Baker's yeast</name>
    <dbReference type="NCBI Taxonomy" id="559292"/>
    <lineage>
        <taxon>Eukaryota</taxon>
        <taxon>Fungi</taxon>
        <taxon>Dikarya</taxon>
        <taxon>Ascomycota</taxon>
        <taxon>Saccharomycotina</taxon>
        <taxon>Saccharomycetes</taxon>
        <taxon>Saccharomycetales</taxon>
        <taxon>Saccharomycetaceae</taxon>
        <taxon>Saccharomyces</taxon>
    </lineage>
</organism>
<reference key="1">
    <citation type="journal article" date="1997" name="Yeast">
        <title>Sequencing analysis of a 36.8 kb fragment of yeast chromosome XV reveals 26 open reading frames including SEC63, CDC31, SUG2, GCD1, RBL2, PNT1, PAC1 and VPH1.</title>
        <authorList>
            <person name="Poirey R."/>
            <person name="Jauniaux J.-C."/>
        </authorList>
    </citation>
    <scope>NUCLEOTIDE SEQUENCE [GENOMIC DNA]</scope>
    <source>
        <strain>ATCC 96604 / S288c / FY1679</strain>
    </source>
</reference>
<reference key="2">
    <citation type="journal article" date="1997" name="Nature">
        <title>The nucleotide sequence of Saccharomyces cerevisiae chromosome XV.</title>
        <authorList>
            <person name="Dujon B."/>
            <person name="Albermann K."/>
            <person name="Aldea M."/>
            <person name="Alexandraki D."/>
            <person name="Ansorge W."/>
            <person name="Arino J."/>
            <person name="Benes V."/>
            <person name="Bohn C."/>
            <person name="Bolotin-Fukuhara M."/>
            <person name="Bordonne R."/>
            <person name="Boyer J."/>
            <person name="Camasses A."/>
            <person name="Casamayor A."/>
            <person name="Casas C."/>
            <person name="Cheret G."/>
            <person name="Cziepluch C."/>
            <person name="Daignan-Fornier B."/>
            <person name="Dang V.-D."/>
            <person name="de Haan M."/>
            <person name="Delius H."/>
            <person name="Durand P."/>
            <person name="Fairhead C."/>
            <person name="Feldmann H."/>
            <person name="Gaillon L."/>
            <person name="Galisson F."/>
            <person name="Gamo F.-J."/>
            <person name="Gancedo C."/>
            <person name="Goffeau A."/>
            <person name="Goulding S.E."/>
            <person name="Grivell L.A."/>
            <person name="Habbig B."/>
            <person name="Hand N.J."/>
            <person name="Hani J."/>
            <person name="Hattenhorst U."/>
            <person name="Hebling U."/>
            <person name="Hernando Y."/>
            <person name="Herrero E."/>
            <person name="Heumann K."/>
            <person name="Hiesel R."/>
            <person name="Hilger F."/>
            <person name="Hofmann B."/>
            <person name="Hollenberg C.P."/>
            <person name="Hughes B."/>
            <person name="Jauniaux J.-C."/>
            <person name="Kalogeropoulos A."/>
            <person name="Katsoulou C."/>
            <person name="Kordes E."/>
            <person name="Lafuente M.J."/>
            <person name="Landt O."/>
            <person name="Louis E.J."/>
            <person name="Maarse A.C."/>
            <person name="Madania A."/>
            <person name="Mannhaupt G."/>
            <person name="Marck C."/>
            <person name="Martin R.P."/>
            <person name="Mewes H.-W."/>
            <person name="Michaux G."/>
            <person name="Paces V."/>
            <person name="Parle-McDermott A.G."/>
            <person name="Pearson B.M."/>
            <person name="Perrin A."/>
            <person name="Pettersson B."/>
            <person name="Poch O."/>
            <person name="Pohl T.M."/>
            <person name="Poirey R."/>
            <person name="Portetelle D."/>
            <person name="Pujol A."/>
            <person name="Purnelle B."/>
            <person name="Ramezani Rad M."/>
            <person name="Rechmann S."/>
            <person name="Schwager C."/>
            <person name="Schweizer M."/>
            <person name="Sor F."/>
            <person name="Sterky F."/>
            <person name="Tarassov I.A."/>
            <person name="Teodoru C."/>
            <person name="Tettelin H."/>
            <person name="Thierry A."/>
            <person name="Tobiasch E."/>
            <person name="Tzermia M."/>
            <person name="Uhlen M."/>
            <person name="Unseld M."/>
            <person name="Valens M."/>
            <person name="Vandenbol M."/>
            <person name="Vetter I."/>
            <person name="Vlcek C."/>
            <person name="Voet M."/>
            <person name="Volckaert G."/>
            <person name="Voss H."/>
            <person name="Wambutt R."/>
            <person name="Wedler H."/>
            <person name="Wiemann S."/>
            <person name="Winsor B."/>
            <person name="Wolfe K.H."/>
            <person name="Zollner A."/>
            <person name="Zumstein E."/>
            <person name="Kleine K."/>
        </authorList>
    </citation>
    <scope>NUCLEOTIDE SEQUENCE [LARGE SCALE GENOMIC DNA]</scope>
    <source>
        <strain>ATCC 204508 / S288c</strain>
    </source>
</reference>
<reference key="3">
    <citation type="journal article" date="2014" name="G3 (Bethesda)">
        <title>The reference genome sequence of Saccharomyces cerevisiae: Then and now.</title>
        <authorList>
            <person name="Engel S.R."/>
            <person name="Dietrich F.S."/>
            <person name="Fisk D.G."/>
            <person name="Binkley G."/>
            <person name="Balakrishnan R."/>
            <person name="Costanzo M.C."/>
            <person name="Dwight S.S."/>
            <person name="Hitz B.C."/>
            <person name="Karra K."/>
            <person name="Nash R.S."/>
            <person name="Weng S."/>
            <person name="Wong E.D."/>
            <person name="Lloyd P."/>
            <person name="Skrzypek M.S."/>
            <person name="Miyasato S.R."/>
            <person name="Simison M."/>
            <person name="Cherry J.M."/>
        </authorList>
    </citation>
    <scope>GENOME REANNOTATION</scope>
    <source>
        <strain>ATCC 204508 / S288c</strain>
    </source>
</reference>
<reference key="4">
    <citation type="journal article" date="2003" name="Mol. Cell">
        <title>Assigning function to yeast proteins by integration of technologies.</title>
        <authorList>
            <person name="Hazbun T.R."/>
            <person name="Malmstroem L."/>
            <person name="Anderson S."/>
            <person name="Graczyk B.J."/>
            <person name="Fox B."/>
            <person name="Riffle M."/>
            <person name="Sundin B.A."/>
            <person name="Aranda J.D."/>
            <person name="McDonald W.H."/>
            <person name="Chiu C.-H."/>
            <person name="Snydsman B.E."/>
            <person name="Bradley P."/>
            <person name="Muller E.G.D."/>
            <person name="Fields S."/>
            <person name="Baker D."/>
            <person name="Yates J.R. III"/>
            <person name="Davis T.N."/>
        </authorList>
    </citation>
    <scope>SUBCELLULAR LOCATION [LARGE SCALE ANALYSIS]</scope>
</reference>
<reference key="5">
    <citation type="journal article" date="2003" name="Nature">
        <title>Global analysis of protein localization in budding yeast.</title>
        <authorList>
            <person name="Huh W.-K."/>
            <person name="Falvo J.V."/>
            <person name="Gerke L.C."/>
            <person name="Carroll A.S."/>
            <person name="Howson R.W."/>
            <person name="Weissman J.S."/>
            <person name="O'Shea E.K."/>
        </authorList>
    </citation>
    <scope>SUBCELLULAR LOCATION [LARGE SCALE ANALYSIS]</scope>
</reference>
<reference key="6">
    <citation type="journal article" date="2003" name="Nature">
        <title>Global analysis of protein expression in yeast.</title>
        <authorList>
            <person name="Ghaemmaghami S."/>
            <person name="Huh W.-K."/>
            <person name="Bower K."/>
            <person name="Howson R.W."/>
            <person name="Belle A."/>
            <person name="Dephoure N."/>
            <person name="O'Shea E.K."/>
            <person name="Weissman J.S."/>
        </authorList>
    </citation>
    <scope>LEVEL OF PROTEIN EXPRESSION [LARGE SCALE ANALYSIS]</scope>
</reference>
<reference key="7">
    <citation type="journal article" date="2008" name="Mol. Cell">
        <title>Toward a comprehensive temperature-sensitive mutant repository of the essential genes of Saccharomyces cerevisiae.</title>
        <authorList>
            <person name="Ben-Aroya S."/>
            <person name="Coombes C."/>
            <person name="Kwok T."/>
            <person name="O'Donnell K.A."/>
            <person name="Boeke J.D."/>
            <person name="Hieter P."/>
        </authorList>
    </citation>
    <scope>FUNCTION</scope>
</reference>
<reference key="8">
    <citation type="journal article" date="2011" name="Cell Cycle">
        <title>A role for GPN-loop GTPase yGPN1 in sister chromatid cohesion.</title>
        <authorList>
            <person name="Alonso B."/>
            <person name="Chaussinand G."/>
            <person name="Armengaud J."/>
            <person name="Godon C."/>
        </authorList>
    </citation>
    <scope>GENE NAME</scope>
</reference>
<reference key="9">
    <citation type="journal article" date="2011" name="J. Biol. Chem.">
        <title>GTP-dependent binding and nuclear transport of RNA polymerase II by Npa3 protein.</title>
        <authorList>
            <person name="Staresincic L."/>
            <person name="Walker J."/>
            <person name="Dirac-Svejstrup A.B."/>
            <person name="Mitter R."/>
            <person name="Svejstrup J.Q."/>
        </authorList>
    </citation>
    <scope>INTERACTION WITH NPA3</scope>
</reference>
<reference key="10">
    <citation type="journal article" date="2013" name="Cell Cycle">
        <title>Eukaryotic GPN-loop GTPases paralogs use a dimeric assembly reminiscent of archeal GPN.</title>
        <authorList>
            <person name="Alonso B."/>
            <person name="Beraud C."/>
            <person name="Meguellati S."/>
            <person name="Chen S.W."/>
            <person name="Pellequer J.L."/>
            <person name="Armengaud J."/>
            <person name="Godon C."/>
        </authorList>
    </citation>
    <scope>INTERACTION WITH NPA3</scope>
    <scope>MUTAGENESIS OF GLU-112</scope>
</reference>
<reference key="11">
    <citation type="journal article" date="2013" name="Genetics">
        <title>Biogenesis of RNA polymerases II and III requires the conserved GPN small GTPases in Saccharomyces cerevisiae.</title>
        <authorList>
            <person name="Minaker S.W."/>
            <person name="Filiatrault M.C."/>
            <person name="Ben-Aroya S."/>
            <person name="Hieter P."/>
            <person name="Stirling P.C."/>
        </authorList>
    </citation>
    <scope>FUNCTION</scope>
    <scope>INTERACTION WITH NPA3 AND GPN3</scope>
</reference>
<gene>
    <name evidence="10" type="primary">GPN2</name>
    <name evidence="12" type="ordered locus">YOR262W</name>
</gene>
<proteinExistence type="evidence at protein level"/>
<sequence length="347" mass="39724">MPFAQIVIGPPGSGKSTYCNGCSQFFNAIGRHSQVVNMDPANDALPYPCAVDIRDFITLEEIMQEQQLGPNGGLMYAVESLDNSIDLFILQIKSLVEEEKAYLVFDCPGQVELFTHHSSLFNIFKKMEKELDIRFCVVNLIDCFYMTSPSQYISILLLALRSMLMMDLPHINVFSKIDMLKSYGELPFRLDYYTEVQDLDYLEPYIEKEGSSVLGKKYSKLTETIKELVSDFNLVSFEVLSVDDKESMINLQGVIDKANGYIFGASEVGGDTVWAEASREGALIANYDIQDRWIDNKEKYDKEEEEKRTALLKEQELQNKAVDVNEEDEWENALKEWEEKQGMDFVR</sequence>
<name>GPN2_YEAST</name>
<feature type="chain" id="PRO_0000245255" description="GPN-loop GTPase 2">
    <location>
        <begin position="1"/>
        <end position="347"/>
    </location>
</feature>
<feature type="short sequence motif" description="Gly-Pro-Asn (GPN)-loop; involved in dimer interface" evidence="2">
    <location>
        <begin position="69"/>
        <end position="71"/>
    </location>
</feature>
<feature type="binding site" evidence="2">
    <location>
        <begin position="12"/>
        <end position="17"/>
    </location>
    <ligand>
        <name>GTP</name>
        <dbReference type="ChEBI" id="CHEBI:37565"/>
    </ligand>
</feature>
<feature type="binding site" evidence="2">
    <location>
        <begin position="175"/>
        <end position="178"/>
    </location>
    <ligand>
        <name>GTP</name>
        <dbReference type="ChEBI" id="CHEBI:37565"/>
    </ligand>
</feature>
<feature type="site" description="Stabilizes the phosphate intermediate; shared with dimeric partner" evidence="2">
    <location>
        <position position="71"/>
    </location>
</feature>
<feature type="mutagenesis site" description="Impairs heterodimer formation with NPA3/GPN1." evidence="9">
    <original>E</original>
    <variation>K</variation>
    <variation>A</variation>
    <location>
        <position position="112"/>
    </location>
</feature>
<evidence type="ECO:0000250" key="1">
    <source>
        <dbReference type="UniProtKB" id="Q9H9Y4"/>
    </source>
</evidence>
<evidence type="ECO:0000250" key="2">
    <source>
        <dbReference type="UniProtKB" id="Q9UYR9"/>
    </source>
</evidence>
<evidence type="ECO:0000269" key="3">
    <source>
    </source>
</evidence>
<evidence type="ECO:0000269" key="4">
    <source>
    </source>
</evidence>
<evidence type="ECO:0000269" key="5">
    <source>
    </source>
</evidence>
<evidence type="ECO:0000269" key="6">
    <source>
    </source>
</evidence>
<evidence type="ECO:0000269" key="7">
    <source>
    </source>
</evidence>
<evidence type="ECO:0000269" key="8">
    <source>
    </source>
</evidence>
<evidence type="ECO:0000269" key="9">
    <source>
    </source>
</evidence>
<evidence type="ECO:0000303" key="10">
    <source>
    </source>
</evidence>
<evidence type="ECO:0000305" key="11"/>
<evidence type="ECO:0000312" key="12">
    <source>
        <dbReference type="SGD" id="S000005788"/>
    </source>
</evidence>